<evidence type="ECO:0000255" key="1">
    <source>
        <dbReference type="HAMAP-Rule" id="MF_03124"/>
    </source>
</evidence>
<name>ARGJ_YEAS7</name>
<proteinExistence type="inferred from homology"/>
<organism>
    <name type="scientific">Saccharomyces cerevisiae (strain YJM789)</name>
    <name type="common">Baker's yeast</name>
    <dbReference type="NCBI Taxonomy" id="307796"/>
    <lineage>
        <taxon>Eukaryota</taxon>
        <taxon>Fungi</taxon>
        <taxon>Dikarya</taxon>
        <taxon>Ascomycota</taxon>
        <taxon>Saccharomycotina</taxon>
        <taxon>Saccharomycetes</taxon>
        <taxon>Saccharomycetales</taxon>
        <taxon>Saccharomycetaceae</taxon>
        <taxon>Saccharomyces</taxon>
    </lineage>
</organism>
<dbReference type="EC" id="2.3.1.35" evidence="1"/>
<dbReference type="EC" id="2.3.1.1" evidence="1"/>
<dbReference type="EMBL" id="AAFW02000020">
    <property type="protein sequence ID" value="EDN64451.1"/>
    <property type="molecule type" value="Genomic_DNA"/>
</dbReference>
<dbReference type="SMR" id="A6ZMC1"/>
<dbReference type="MEROPS" id="T05.001"/>
<dbReference type="HOGENOM" id="CLU_027172_1_0_1"/>
<dbReference type="UniPathway" id="UPA00068">
    <property type="reaction ID" value="UER00106"/>
</dbReference>
<dbReference type="UniPathway" id="UPA00068">
    <property type="reaction ID" value="UER00111"/>
</dbReference>
<dbReference type="Proteomes" id="UP000007060">
    <property type="component" value="Unassembled WGS sequence"/>
</dbReference>
<dbReference type="GO" id="GO:0005759">
    <property type="term" value="C:mitochondrial matrix"/>
    <property type="evidence" value="ECO:0007669"/>
    <property type="project" value="UniProtKB-SubCell"/>
</dbReference>
<dbReference type="GO" id="GO:0004358">
    <property type="term" value="F:glutamate N-acetyltransferase activity"/>
    <property type="evidence" value="ECO:0007669"/>
    <property type="project" value="UniProtKB-UniRule"/>
</dbReference>
<dbReference type="GO" id="GO:0004042">
    <property type="term" value="F:L-glutamate N-acetyltransferase activity"/>
    <property type="evidence" value="ECO:0007669"/>
    <property type="project" value="UniProtKB-UniRule"/>
</dbReference>
<dbReference type="GO" id="GO:0006526">
    <property type="term" value="P:L-arginine biosynthetic process"/>
    <property type="evidence" value="ECO:0007669"/>
    <property type="project" value="UniProtKB-UniRule"/>
</dbReference>
<dbReference type="GO" id="GO:0006592">
    <property type="term" value="P:ornithine biosynthetic process"/>
    <property type="evidence" value="ECO:0007669"/>
    <property type="project" value="TreeGrafter"/>
</dbReference>
<dbReference type="CDD" id="cd02152">
    <property type="entry name" value="OAT"/>
    <property type="match status" value="1"/>
</dbReference>
<dbReference type="FunFam" id="3.10.20.340:FF:000002">
    <property type="entry name" value="Arginine biosynthesis bifunctional protein ArgJ, mitochondrial"/>
    <property type="match status" value="1"/>
</dbReference>
<dbReference type="FunFam" id="3.30.2330.10:FF:000001">
    <property type="entry name" value="Arginine biosynthesis bifunctional protein ArgJ, mitochondrial"/>
    <property type="match status" value="1"/>
</dbReference>
<dbReference type="FunFam" id="3.60.70.12:FF:000002">
    <property type="entry name" value="Arginine biosynthesis bifunctional protein ArgJ, mitochondrial"/>
    <property type="match status" value="1"/>
</dbReference>
<dbReference type="Gene3D" id="3.30.2330.10">
    <property type="entry name" value="arginine biosynthesis bifunctional protein suprefamily"/>
    <property type="match status" value="1"/>
</dbReference>
<dbReference type="Gene3D" id="3.10.20.340">
    <property type="entry name" value="ArgJ beta chain, C-terminal domain"/>
    <property type="match status" value="1"/>
</dbReference>
<dbReference type="Gene3D" id="3.60.70.12">
    <property type="entry name" value="L-amino peptidase D-ALA esterase/amidase"/>
    <property type="match status" value="1"/>
</dbReference>
<dbReference type="HAMAP" id="MF_01106">
    <property type="entry name" value="ArgJ"/>
    <property type="match status" value="1"/>
</dbReference>
<dbReference type="InterPro" id="IPR002813">
    <property type="entry name" value="Arg_biosynth_ArgJ"/>
</dbReference>
<dbReference type="InterPro" id="IPR016117">
    <property type="entry name" value="ArgJ-like_dom_sf"/>
</dbReference>
<dbReference type="InterPro" id="IPR042195">
    <property type="entry name" value="ArgJ_beta_C"/>
</dbReference>
<dbReference type="NCBIfam" id="TIGR00120">
    <property type="entry name" value="ArgJ"/>
    <property type="match status" value="1"/>
</dbReference>
<dbReference type="NCBIfam" id="NF003802">
    <property type="entry name" value="PRK05388.1"/>
    <property type="match status" value="1"/>
</dbReference>
<dbReference type="PANTHER" id="PTHR23100">
    <property type="entry name" value="ARGININE BIOSYNTHESIS BIFUNCTIONAL PROTEIN ARGJ"/>
    <property type="match status" value="1"/>
</dbReference>
<dbReference type="PANTHER" id="PTHR23100:SF0">
    <property type="entry name" value="ARGININE BIOSYNTHESIS BIFUNCTIONAL PROTEIN ARGJ, MITOCHONDRIAL"/>
    <property type="match status" value="1"/>
</dbReference>
<dbReference type="Pfam" id="PF01960">
    <property type="entry name" value="ArgJ"/>
    <property type="match status" value="1"/>
</dbReference>
<dbReference type="SUPFAM" id="SSF56266">
    <property type="entry name" value="DmpA/ArgJ-like"/>
    <property type="match status" value="1"/>
</dbReference>
<comment type="function">
    <text evidence="1">Catalyzes two activities which are involved in the cyclic version of arginine biosynthesis: the synthesis of acetylglutamate from glutamate and acetyl-CoA, and of ornithine by transacetylation between acetylornithine and glutamate.</text>
</comment>
<comment type="catalytic activity">
    <reaction evidence="1">
        <text>N(2)-acetyl-L-ornithine + L-glutamate = N-acetyl-L-glutamate + L-ornithine</text>
        <dbReference type="Rhea" id="RHEA:15349"/>
        <dbReference type="ChEBI" id="CHEBI:29985"/>
        <dbReference type="ChEBI" id="CHEBI:44337"/>
        <dbReference type="ChEBI" id="CHEBI:46911"/>
        <dbReference type="ChEBI" id="CHEBI:57805"/>
        <dbReference type="EC" id="2.3.1.35"/>
    </reaction>
</comment>
<comment type="catalytic activity">
    <reaction evidence="1">
        <text>L-glutamate + acetyl-CoA = N-acetyl-L-glutamate + CoA + H(+)</text>
        <dbReference type="Rhea" id="RHEA:24292"/>
        <dbReference type="ChEBI" id="CHEBI:15378"/>
        <dbReference type="ChEBI" id="CHEBI:29985"/>
        <dbReference type="ChEBI" id="CHEBI:44337"/>
        <dbReference type="ChEBI" id="CHEBI:57287"/>
        <dbReference type="ChEBI" id="CHEBI:57288"/>
        <dbReference type="EC" id="2.3.1.1"/>
    </reaction>
</comment>
<comment type="pathway">
    <text evidence="1">Amino-acid biosynthesis; L-arginine biosynthesis; L-ornithine and N-acetyl-L-glutamate from L-glutamate and N(2)-acetyl-L-ornithine (cyclic): step 1/1.</text>
</comment>
<comment type="pathway">
    <text evidence="1">Amino-acid biosynthesis; L-arginine biosynthesis; N(2)-acetyl-L-ornithine from L-glutamate: step 1/4.</text>
</comment>
<comment type="subunit">
    <text evidence="1">Heterodimer of an alpha and a beta chain.</text>
</comment>
<comment type="subcellular location">
    <subcellularLocation>
        <location evidence="1">Mitochondrion matrix</location>
    </subcellularLocation>
</comment>
<comment type="PTM">
    <text evidence="1">The alpha and beta chains are autoproteolytically processed from a single precursor protein within the mitochondrion.</text>
</comment>
<comment type="similarity">
    <text evidence="1">Belongs to the ArgJ family.</text>
</comment>
<gene>
    <name evidence="1" type="primary">ARG7</name>
    <name type="ORF">SCY_4233</name>
</gene>
<feature type="transit peptide" description="Mitochondrion" evidence="1">
    <location>
        <begin position="1"/>
        <end position="8"/>
    </location>
</feature>
<feature type="chain" id="PRO_0000398104" description="Arginine biosynthesis bifunctional protein ArgJ alpha chain" evidence="1">
    <location>
        <begin position="9"/>
        <end position="214"/>
    </location>
</feature>
<feature type="chain" id="PRO_0000398105" description="Arginine biosynthesis bifunctional protein ArgJ beta chain" evidence="1">
    <location>
        <begin position="215"/>
        <end position="441"/>
    </location>
</feature>
<feature type="active site" description="Nucleophile" evidence="1">
    <location>
        <position position="215"/>
    </location>
</feature>
<feature type="binding site" evidence="1">
    <location>
        <position position="177"/>
    </location>
    <ligand>
        <name>substrate</name>
    </ligand>
</feature>
<feature type="binding site" evidence="1">
    <location>
        <position position="204"/>
    </location>
    <ligand>
        <name>substrate</name>
    </ligand>
</feature>
<feature type="binding site" evidence="1">
    <location>
        <position position="215"/>
    </location>
    <ligand>
        <name>substrate</name>
    </ligand>
</feature>
<feature type="binding site" evidence="1">
    <location>
        <position position="301"/>
    </location>
    <ligand>
        <name>substrate</name>
    </ligand>
</feature>
<feature type="binding site" evidence="1">
    <location>
        <position position="436"/>
    </location>
    <ligand>
        <name>substrate</name>
    </ligand>
</feature>
<feature type="binding site" evidence="1">
    <location>
        <position position="441"/>
    </location>
    <ligand>
        <name>substrate</name>
    </ligand>
</feature>
<feature type="site" description="Involved in the stabilization of negative charge on the oxyanion by the formation of the oxyanion hole" evidence="1">
    <location>
        <position position="136"/>
    </location>
</feature>
<feature type="site" description="Involved in the stabilization of negative charge on the oxyanion by the formation of the oxyanion hole" evidence="1">
    <location>
        <position position="137"/>
    </location>
</feature>
<feature type="site" description="Cleavage; by autolysis" evidence="1">
    <location>
        <begin position="214"/>
        <end position="215"/>
    </location>
</feature>
<keyword id="KW-0012">Acyltransferase</keyword>
<keyword id="KW-0028">Amino-acid biosynthesis</keyword>
<keyword id="KW-0055">Arginine biosynthesis</keyword>
<keyword id="KW-0068">Autocatalytic cleavage</keyword>
<keyword id="KW-0496">Mitochondrion</keyword>
<keyword id="KW-0511">Multifunctional enzyme</keyword>
<keyword id="KW-0808">Transferase</keyword>
<keyword id="KW-0809">Transit peptide</keyword>
<protein>
    <recommendedName>
        <fullName evidence="1">Arginine biosynthesis bifunctional protein ArgJ, mitochondrial</fullName>
    </recommendedName>
    <domain>
        <recommendedName>
            <fullName evidence="1">Glutamate N-acetyltransferase</fullName>
            <shortName evidence="1">GAT</shortName>
            <ecNumber evidence="1">2.3.1.35</ecNumber>
        </recommendedName>
        <alternativeName>
            <fullName evidence="1">Ornithine acetyltransferase</fullName>
            <shortName evidence="1">OATase</shortName>
        </alternativeName>
        <alternativeName>
            <fullName evidence="1">Ornithine transacetylase</fullName>
        </alternativeName>
    </domain>
    <domain>
        <recommendedName>
            <fullName evidence="1">Amino-acid acetyltransferase</fullName>
            <ecNumber evidence="1">2.3.1.1</ecNumber>
        </recommendedName>
        <alternativeName>
            <fullName evidence="1">N-acetylglutamate synthase</fullName>
            <shortName evidence="1">AGS</shortName>
        </alternativeName>
    </domain>
    <component>
        <recommendedName>
            <fullName evidence="1">Arginine biosynthesis bifunctional protein ArgJ alpha chain</fullName>
        </recommendedName>
    </component>
    <component>
        <recommendedName>
            <fullName evidence="1">Arginine biosynthesis bifunctional protein ArgJ beta chain</fullName>
        </recommendedName>
    </component>
</protein>
<reference key="1">
    <citation type="journal article" date="2007" name="Proc. Natl. Acad. Sci. U.S.A.">
        <title>Genome sequencing and comparative analysis of Saccharomyces cerevisiae strain YJM789.</title>
        <authorList>
            <person name="Wei W."/>
            <person name="McCusker J.H."/>
            <person name="Hyman R.W."/>
            <person name="Jones T."/>
            <person name="Ning Y."/>
            <person name="Cao Z."/>
            <person name="Gu Z."/>
            <person name="Bruno D."/>
            <person name="Miranda M."/>
            <person name="Nguyen M."/>
            <person name="Wilhelmy J."/>
            <person name="Komp C."/>
            <person name="Tamse R."/>
            <person name="Wang X."/>
            <person name="Jia P."/>
            <person name="Luedi P."/>
            <person name="Oefner P.J."/>
            <person name="David L."/>
            <person name="Dietrich F.S."/>
            <person name="Li Y."/>
            <person name="Davis R.W."/>
            <person name="Steinmetz L.M."/>
        </authorList>
    </citation>
    <scope>NUCLEOTIDE SEQUENCE [LARGE SCALE GENOMIC DNA]</scope>
    <source>
        <strain>YJM789</strain>
    </source>
</reference>
<accession>A6ZMC1</accession>
<sequence length="441" mass="47849">MRISSTLLQRSKQLIDKYALYVPKTGSFPKGFEVGYTASGVKKNGSLDLGVILNTNKSRPSTAAAVFTTNKFKAAPVLTSKKVLETARGKNINAIVVNSGCANSVTGDLGMKDAQVMIDLVNDKIGQKNSTLVMSTGVIGQRLQMDKISTGINKIFGEEKFGSDFNSWLNVAKSICTTDTFPKLVTSRFKLPSGTEYTLTGMAKGAGMICPNMATLLGFIVTDLPIESKALQKMLTFATTRSFNCISVDGDMSTNDTICMLANGAIDTKEINEDSKDFEQVKLQVTEFAQRLAQLVVRDGEGSTKFVTVNVKNALHFEDAKIIAESISNSMLVKTALYGQDANWGRILCAIGYAKLNDLKSLDVNKINVSFIATDNSEPRELKLVANGVPQLEIDETRASEILALNDLEVSVDLGTGDQAAQFWTCDLSHEYVTINGDYRS</sequence>